<dbReference type="EC" id="2.4.2.9" evidence="1"/>
<dbReference type="EMBL" id="CP000446">
    <property type="protein sequence ID" value="ABI39450.1"/>
    <property type="molecule type" value="Genomic_DNA"/>
</dbReference>
<dbReference type="RefSeq" id="WP_011072698.1">
    <property type="nucleotide sequence ID" value="NC_008321.1"/>
</dbReference>
<dbReference type="SMR" id="Q0HHL7"/>
<dbReference type="KEGG" id="she:Shewmr4_2379"/>
<dbReference type="HOGENOM" id="CLU_067096_2_2_6"/>
<dbReference type="UniPathway" id="UPA00574">
    <property type="reaction ID" value="UER00636"/>
</dbReference>
<dbReference type="GO" id="GO:0005525">
    <property type="term" value="F:GTP binding"/>
    <property type="evidence" value="ECO:0007669"/>
    <property type="project" value="UniProtKB-KW"/>
</dbReference>
<dbReference type="GO" id="GO:0000287">
    <property type="term" value="F:magnesium ion binding"/>
    <property type="evidence" value="ECO:0007669"/>
    <property type="project" value="UniProtKB-UniRule"/>
</dbReference>
<dbReference type="GO" id="GO:0004845">
    <property type="term" value="F:uracil phosphoribosyltransferase activity"/>
    <property type="evidence" value="ECO:0007669"/>
    <property type="project" value="UniProtKB-UniRule"/>
</dbReference>
<dbReference type="GO" id="GO:0044206">
    <property type="term" value="P:UMP salvage"/>
    <property type="evidence" value="ECO:0007669"/>
    <property type="project" value="UniProtKB-UniRule"/>
</dbReference>
<dbReference type="GO" id="GO:0006223">
    <property type="term" value="P:uracil salvage"/>
    <property type="evidence" value="ECO:0007669"/>
    <property type="project" value="InterPro"/>
</dbReference>
<dbReference type="CDD" id="cd06223">
    <property type="entry name" value="PRTases_typeI"/>
    <property type="match status" value="1"/>
</dbReference>
<dbReference type="FunFam" id="3.40.50.2020:FF:000003">
    <property type="entry name" value="Uracil phosphoribosyltransferase"/>
    <property type="match status" value="1"/>
</dbReference>
<dbReference type="Gene3D" id="3.40.50.2020">
    <property type="match status" value="1"/>
</dbReference>
<dbReference type="HAMAP" id="MF_01218_B">
    <property type="entry name" value="Upp_B"/>
    <property type="match status" value="1"/>
</dbReference>
<dbReference type="InterPro" id="IPR000836">
    <property type="entry name" value="PRibTrfase_dom"/>
</dbReference>
<dbReference type="InterPro" id="IPR029057">
    <property type="entry name" value="PRTase-like"/>
</dbReference>
<dbReference type="InterPro" id="IPR034332">
    <property type="entry name" value="Upp_B"/>
</dbReference>
<dbReference type="InterPro" id="IPR050054">
    <property type="entry name" value="UPRTase/APRTase"/>
</dbReference>
<dbReference type="InterPro" id="IPR005765">
    <property type="entry name" value="Ura_phspho_trans"/>
</dbReference>
<dbReference type="NCBIfam" id="NF001097">
    <property type="entry name" value="PRK00129.1"/>
    <property type="match status" value="1"/>
</dbReference>
<dbReference type="NCBIfam" id="TIGR01091">
    <property type="entry name" value="upp"/>
    <property type="match status" value="1"/>
</dbReference>
<dbReference type="PANTHER" id="PTHR32315">
    <property type="entry name" value="ADENINE PHOSPHORIBOSYLTRANSFERASE"/>
    <property type="match status" value="1"/>
</dbReference>
<dbReference type="PANTHER" id="PTHR32315:SF4">
    <property type="entry name" value="URACIL PHOSPHORIBOSYLTRANSFERASE, CHLOROPLASTIC"/>
    <property type="match status" value="1"/>
</dbReference>
<dbReference type="Pfam" id="PF14681">
    <property type="entry name" value="UPRTase"/>
    <property type="match status" value="1"/>
</dbReference>
<dbReference type="SUPFAM" id="SSF53271">
    <property type="entry name" value="PRTase-like"/>
    <property type="match status" value="1"/>
</dbReference>
<gene>
    <name evidence="1" type="primary">upp</name>
    <name type="ordered locus">Shewmr4_2379</name>
</gene>
<feature type="chain" id="PRO_1000053784" description="Uracil phosphoribosyltransferase">
    <location>
        <begin position="1"/>
        <end position="208"/>
    </location>
</feature>
<feature type="binding site" evidence="1">
    <location>
        <position position="78"/>
    </location>
    <ligand>
        <name>5-phospho-alpha-D-ribose 1-diphosphate</name>
        <dbReference type="ChEBI" id="CHEBI:58017"/>
    </ligand>
</feature>
<feature type="binding site" evidence="1">
    <location>
        <position position="103"/>
    </location>
    <ligand>
        <name>5-phospho-alpha-D-ribose 1-diphosphate</name>
        <dbReference type="ChEBI" id="CHEBI:58017"/>
    </ligand>
</feature>
<feature type="binding site" evidence="1">
    <location>
        <begin position="130"/>
        <end position="138"/>
    </location>
    <ligand>
        <name>5-phospho-alpha-D-ribose 1-diphosphate</name>
        <dbReference type="ChEBI" id="CHEBI:58017"/>
    </ligand>
</feature>
<feature type="binding site" evidence="1">
    <location>
        <position position="193"/>
    </location>
    <ligand>
        <name>uracil</name>
        <dbReference type="ChEBI" id="CHEBI:17568"/>
    </ligand>
</feature>
<feature type="binding site" evidence="1">
    <location>
        <begin position="198"/>
        <end position="200"/>
    </location>
    <ligand>
        <name>uracil</name>
        <dbReference type="ChEBI" id="CHEBI:17568"/>
    </ligand>
</feature>
<feature type="binding site" evidence="1">
    <location>
        <position position="199"/>
    </location>
    <ligand>
        <name>5-phospho-alpha-D-ribose 1-diphosphate</name>
        <dbReference type="ChEBI" id="CHEBI:58017"/>
    </ligand>
</feature>
<protein>
    <recommendedName>
        <fullName evidence="1">Uracil phosphoribosyltransferase</fullName>
        <ecNumber evidence="1">2.4.2.9</ecNumber>
    </recommendedName>
    <alternativeName>
        <fullName evidence="1">UMP pyrophosphorylase</fullName>
    </alternativeName>
    <alternativeName>
        <fullName evidence="1">UPRTase</fullName>
    </alternativeName>
</protein>
<accession>Q0HHL7</accession>
<reference key="1">
    <citation type="submission" date="2006-08" db="EMBL/GenBank/DDBJ databases">
        <title>Complete sequence of Shewanella sp. MR-4.</title>
        <authorList>
            <consortium name="US DOE Joint Genome Institute"/>
            <person name="Copeland A."/>
            <person name="Lucas S."/>
            <person name="Lapidus A."/>
            <person name="Barry K."/>
            <person name="Detter J.C."/>
            <person name="Glavina del Rio T."/>
            <person name="Hammon N."/>
            <person name="Israni S."/>
            <person name="Dalin E."/>
            <person name="Tice H."/>
            <person name="Pitluck S."/>
            <person name="Kiss H."/>
            <person name="Brettin T."/>
            <person name="Bruce D."/>
            <person name="Han C."/>
            <person name="Tapia R."/>
            <person name="Gilna P."/>
            <person name="Schmutz J."/>
            <person name="Larimer F."/>
            <person name="Land M."/>
            <person name="Hauser L."/>
            <person name="Kyrpides N."/>
            <person name="Mikhailova N."/>
            <person name="Nealson K."/>
            <person name="Konstantinidis K."/>
            <person name="Klappenbach J."/>
            <person name="Tiedje J."/>
            <person name="Richardson P."/>
        </authorList>
    </citation>
    <scope>NUCLEOTIDE SEQUENCE [LARGE SCALE GENOMIC DNA]</scope>
    <source>
        <strain>MR-4</strain>
    </source>
</reference>
<sequence>MKVVEVKHPLVRHKIGLMREGDISTKRFRELAAEVGSLLTYEATADFETETVTIEGWNGPVDVDQIKGKKVTVVPILRAGLGMMDGVLEHIPSARISVVGIYRDEETLEPVPYFEKLASDMNERIALIVDPMLATGGSMIATIDLLKKRGCTSIKALVLVAAPEGIKALEAAHPDVELYTAAIDRCLNEKGYILPGLGDAGDKIFGTK</sequence>
<name>UPP_SHESM</name>
<proteinExistence type="inferred from homology"/>
<comment type="function">
    <text evidence="1">Catalyzes the conversion of uracil and 5-phospho-alpha-D-ribose 1-diphosphate (PRPP) to UMP and diphosphate.</text>
</comment>
<comment type="catalytic activity">
    <reaction evidence="1">
        <text>UMP + diphosphate = 5-phospho-alpha-D-ribose 1-diphosphate + uracil</text>
        <dbReference type="Rhea" id="RHEA:13017"/>
        <dbReference type="ChEBI" id="CHEBI:17568"/>
        <dbReference type="ChEBI" id="CHEBI:33019"/>
        <dbReference type="ChEBI" id="CHEBI:57865"/>
        <dbReference type="ChEBI" id="CHEBI:58017"/>
        <dbReference type="EC" id="2.4.2.9"/>
    </reaction>
</comment>
<comment type="cofactor">
    <cofactor evidence="1">
        <name>Mg(2+)</name>
        <dbReference type="ChEBI" id="CHEBI:18420"/>
    </cofactor>
    <text evidence="1">Binds 1 Mg(2+) ion per subunit. The magnesium is bound as Mg-PRPP.</text>
</comment>
<comment type="activity regulation">
    <text evidence="1">Allosterically activated by GTP.</text>
</comment>
<comment type="pathway">
    <text evidence="1">Pyrimidine metabolism; UMP biosynthesis via salvage pathway; UMP from uracil: step 1/1.</text>
</comment>
<comment type="similarity">
    <text evidence="1">Belongs to the UPRTase family.</text>
</comment>
<evidence type="ECO:0000255" key="1">
    <source>
        <dbReference type="HAMAP-Rule" id="MF_01218"/>
    </source>
</evidence>
<keyword id="KW-0021">Allosteric enzyme</keyword>
<keyword id="KW-0328">Glycosyltransferase</keyword>
<keyword id="KW-0342">GTP-binding</keyword>
<keyword id="KW-0460">Magnesium</keyword>
<keyword id="KW-0547">Nucleotide-binding</keyword>
<keyword id="KW-0808">Transferase</keyword>
<organism>
    <name type="scientific">Shewanella sp. (strain MR-4)</name>
    <dbReference type="NCBI Taxonomy" id="60480"/>
    <lineage>
        <taxon>Bacteria</taxon>
        <taxon>Pseudomonadati</taxon>
        <taxon>Pseudomonadota</taxon>
        <taxon>Gammaproteobacteria</taxon>
        <taxon>Alteromonadales</taxon>
        <taxon>Shewanellaceae</taxon>
        <taxon>Shewanella</taxon>
    </lineage>
</organism>